<dbReference type="GO" id="GO:0005576">
    <property type="term" value="C:extracellular region"/>
    <property type="evidence" value="ECO:0007669"/>
    <property type="project" value="UniProtKB-SubCell"/>
</dbReference>
<dbReference type="GO" id="GO:0042742">
    <property type="term" value="P:defense response to bacterium"/>
    <property type="evidence" value="ECO:0007669"/>
    <property type="project" value="UniProtKB-KW"/>
</dbReference>
<dbReference type="InterPro" id="IPR012521">
    <property type="entry name" value="Antimicrobial_frog_2"/>
</dbReference>
<dbReference type="Pfam" id="PF08023">
    <property type="entry name" value="Antimicrobial_2"/>
    <property type="match status" value="1"/>
</dbReference>
<protein>
    <recommendedName>
        <fullName evidence="3">Cyanophlyctin-beta</fullName>
    </recommendedName>
</protein>
<feature type="peptide" id="PRO_0000441013" description="Cyanophlyctin-beta" evidence="2">
    <location>
        <begin position="1"/>
        <end position="33"/>
    </location>
</feature>
<feature type="disulfide bond" evidence="1">
    <location>
        <begin position="27"/>
        <end position="33"/>
    </location>
</feature>
<name>CYPB_EUPCP</name>
<reference evidence="4" key="1">
    <citation type="journal article" date="2014" name="Chem. Biol. Drug Des.">
        <title>Purification and modeling amphipathic alpha helical antimicrobial peptides from skin secretions of Euphlyctis cyanophlyctis.</title>
        <authorList>
            <person name="Asoodeh A."/>
            <person name="Sepahi S."/>
            <person name="Ghorani-Azam A."/>
        </authorList>
    </citation>
    <scope>PROTEIN SEQUENCE</scope>
    <scope>FUNCTION</scope>
    <scope>SUBCELLULAR LOCATION</scope>
    <scope>MASS SPECTROMETRY</scope>
    <scope>IDENTIFICATION BY MASS SPECTROMETRY</scope>
    <source>
        <tissue evidence="3">Skin secretion</tissue>
    </source>
</reference>
<organism evidence="3">
    <name type="scientific">Euphlyctis cyanophlyctis</name>
    <name type="common">Skittering frog</name>
    <dbReference type="NCBI Taxonomy" id="58519"/>
    <lineage>
        <taxon>Eukaryota</taxon>
        <taxon>Metazoa</taxon>
        <taxon>Chordata</taxon>
        <taxon>Craniata</taxon>
        <taxon>Vertebrata</taxon>
        <taxon>Euteleostomi</taxon>
        <taxon>Amphibia</taxon>
        <taxon>Batrachia</taxon>
        <taxon>Anura</taxon>
        <taxon>Neobatrachia</taxon>
        <taxon>Ranoidea</taxon>
        <taxon>Dicroglossidae</taxon>
        <taxon>Dicroglossinae</taxon>
        <taxon>Euphlyctis</taxon>
    </lineage>
</organism>
<proteinExistence type="evidence at protein level"/>
<comment type="function">
    <text evidence="2">Antimicrobial peptide active against E.coli (MIC=5 uM), K.pneumoniae (MIC=10 uM), B.cereus (MIC=7 uM) and S.aureus (MIC=12 uM). Has very little hemolytic activity.</text>
</comment>
<comment type="subcellular location">
    <subcellularLocation>
        <location evidence="2">Secreted</location>
    </subcellularLocation>
</comment>
<comment type="tissue specificity">
    <text evidence="5">Expressed by the skin glands.</text>
</comment>
<comment type="mass spectrometry"/>
<comment type="similarity">
    <text evidence="4">Belongs to the frog skin active peptide (FSAP) family. Brevinin subfamily.</text>
</comment>
<sequence>GFFLNALKNFAKTAGKRLKSLLNHASCKLSGQC</sequence>
<evidence type="ECO:0000250" key="1">
    <source>
        <dbReference type="UniProtKB" id="P86151"/>
    </source>
</evidence>
<evidence type="ECO:0000269" key="2">
    <source>
    </source>
</evidence>
<evidence type="ECO:0000303" key="3">
    <source>
    </source>
</evidence>
<evidence type="ECO:0000305" key="4"/>
<evidence type="ECO:0000305" key="5">
    <source>
    </source>
</evidence>
<keyword id="KW-0878">Amphibian defense peptide</keyword>
<keyword id="KW-0044">Antibiotic</keyword>
<keyword id="KW-0929">Antimicrobial</keyword>
<keyword id="KW-0903">Direct protein sequencing</keyword>
<keyword id="KW-1015">Disulfide bond</keyword>
<keyword id="KW-0964">Secreted</keyword>
<accession>C0HKQ1</accession>